<comment type="subunit">
    <text evidence="1">Homodimer; Interacts with PI16.</text>
</comment>
<comment type="subcellular location">
    <subcellularLocation>
        <location>Secreted</location>
    </subcellularLocation>
    <text evidence="1">Sperm surface.</text>
</comment>
<comment type="tissue specificity">
    <text>Corpora lutea, mostly in the luteal cells surrounding blood vessels.</text>
</comment>
<comment type="similarity">
    <text evidence="4">Belongs to the beta-microseminoprotein family.</text>
</comment>
<comment type="caution">
    <text evidence="4">Was originally thought to inhibit the secretion of FSH by pituitary cells.</text>
</comment>
<organism>
    <name type="scientific">Sus scrofa</name>
    <name type="common">Pig</name>
    <dbReference type="NCBI Taxonomy" id="9823"/>
    <lineage>
        <taxon>Eukaryota</taxon>
        <taxon>Metazoa</taxon>
        <taxon>Chordata</taxon>
        <taxon>Craniata</taxon>
        <taxon>Vertebrata</taxon>
        <taxon>Euteleostomi</taxon>
        <taxon>Mammalia</taxon>
        <taxon>Eutheria</taxon>
        <taxon>Laurasiatheria</taxon>
        <taxon>Artiodactyla</taxon>
        <taxon>Suina</taxon>
        <taxon>Suidae</taxon>
        <taxon>Sus</taxon>
    </lineage>
</organism>
<protein>
    <recommendedName>
        <fullName>Beta-microseminoprotein</fullName>
    </recommendedName>
    <alternativeName>
        <fullName>Prostate secreted seminal plasma protein</fullName>
    </alternativeName>
    <alternativeName>
        <fullName>Prostate secretory protein of 94 amino acids</fullName>
        <shortName>PSP-94</shortName>
        <shortName>PSP94</shortName>
    </alternativeName>
    <alternativeName>
        <fullName>TS507</fullName>
    </alternativeName>
</protein>
<reference key="1">
    <citation type="journal article" date="1995" name="Mol. Reprod. Dev.">
        <title>Expression of prostatic secretory protein (PSP)-like protein in porcine corpus luteum: isolation and characterization of a new gene encoding PSP94-like protein.</title>
        <authorList>
            <person name="Tanaka T."/>
            <person name="Itahana K."/>
            <person name="Andoh N."/>
            <person name="Takeya T."/>
            <person name="Sato E."/>
        </authorList>
    </citation>
    <scope>NUCLEOTIDE SEQUENCE [MRNA]</scope>
</reference>
<reference key="2">
    <citation type="journal article" date="1994" name="Arch. Biochem. Biophys.">
        <title>Amino acid sequence of beta-microseminoprotein from porcine seminal plasma.</title>
        <authorList>
            <person name="Fernlund P."/>
            <person name="Granberg L.B."/>
            <person name="Roepstorff P."/>
        </authorList>
    </citation>
    <scope>PROTEIN SEQUENCE OF 21-111</scope>
    <scope>PYROGLUTAMATE FORMATION AT GLN-21</scope>
    <source>
        <tissue>Seminal plasma</tissue>
    </source>
</reference>
<reference key="3">
    <citation type="journal article" date="2005" name="J. Mol. Biol.">
        <title>Novel solution structure of porcine beta-microseminoprotein.</title>
        <authorList>
            <person name="Wang I."/>
            <person name="Lou Y.C."/>
            <person name="Wu K.P."/>
            <person name="Wu S.H."/>
            <person name="Chang W.C."/>
            <person name="Chen C."/>
        </authorList>
    </citation>
    <scope>STRUCTURE BY NMR OF 21-111</scope>
    <scope>DISULFIDE BONDS</scope>
</reference>
<reference key="4">
    <citation type="journal article" date="2006" name="J. Mol. Biol.">
        <title>Solution structures of human and porcine beta-microseminoprotein.</title>
        <authorList>
            <person name="Ghasriani H."/>
            <person name="Teilum K."/>
            <person name="Johnsson Y."/>
            <person name="Fernlund P."/>
            <person name="Drakenberg T."/>
        </authorList>
    </citation>
    <scope>STRUCTURE BY NMR OF 21-111</scope>
</reference>
<proteinExistence type="evidence at protein level"/>
<feature type="signal peptide" evidence="3">
    <location>
        <begin position="1"/>
        <end position="20"/>
    </location>
</feature>
<feature type="chain" id="PRO_0000019272" description="Beta-microseminoprotein">
    <location>
        <begin position="21"/>
        <end position="111"/>
    </location>
</feature>
<feature type="modified residue" description="Pyrrolidone carboxylic acid" evidence="3">
    <location>
        <position position="21"/>
    </location>
</feature>
<feature type="disulfide bond" evidence="2">
    <location>
        <begin position="22"/>
        <end position="67"/>
    </location>
</feature>
<feature type="disulfide bond" evidence="2">
    <location>
        <begin position="35"/>
        <end position="59"/>
    </location>
</feature>
<feature type="disulfide bond" evidence="2">
    <location>
        <begin position="54"/>
        <end position="90"/>
    </location>
</feature>
<feature type="disulfide bond" evidence="2">
    <location>
        <begin position="57"/>
        <end position="66"/>
    </location>
</feature>
<feature type="disulfide bond" evidence="2">
    <location>
        <begin position="81"/>
        <end position="104"/>
    </location>
</feature>
<feature type="strand" evidence="5">
    <location>
        <begin position="23"/>
        <end position="26"/>
    </location>
</feature>
<feature type="strand" evidence="5">
    <location>
        <begin position="34"/>
        <end position="37"/>
    </location>
</feature>
<feature type="turn" evidence="5">
    <location>
        <begin position="38"/>
        <end position="40"/>
    </location>
</feature>
<feature type="strand" evidence="5">
    <location>
        <begin position="41"/>
        <end position="44"/>
    </location>
</feature>
<feature type="strand" evidence="6">
    <location>
        <begin position="48"/>
        <end position="50"/>
    </location>
</feature>
<feature type="strand" evidence="5">
    <location>
        <begin position="52"/>
        <end position="59"/>
    </location>
</feature>
<feature type="strand" evidence="5">
    <location>
        <begin position="61"/>
        <end position="68"/>
    </location>
</feature>
<feature type="strand" evidence="5">
    <location>
        <begin position="72"/>
        <end position="75"/>
    </location>
</feature>
<feature type="strand" evidence="5">
    <location>
        <begin position="79"/>
        <end position="86"/>
    </location>
</feature>
<feature type="turn" evidence="5">
    <location>
        <begin position="87"/>
        <end position="90"/>
    </location>
</feature>
<feature type="strand" evidence="5">
    <location>
        <begin position="91"/>
        <end position="96"/>
    </location>
</feature>
<feature type="strand" evidence="5">
    <location>
        <begin position="99"/>
        <end position="103"/>
    </location>
</feature>
<feature type="strand" evidence="5">
    <location>
        <begin position="108"/>
        <end position="110"/>
    </location>
</feature>
<sequence length="111" mass="12246">MKFLLGTLVVLATFVTLCNSQCYFIPNQSLKPNECQDLKGVSHPLNSVWKTKDCEECTCGQNAISCCNTAAIPTGYDTNKCQKILNKKTCTYTVVEKKDPGKTCDVTGWVL</sequence>
<evidence type="ECO:0000250" key="1"/>
<evidence type="ECO:0000269" key="2">
    <source>
    </source>
</evidence>
<evidence type="ECO:0000269" key="3">
    <source>
    </source>
</evidence>
<evidence type="ECO:0000305" key="4"/>
<evidence type="ECO:0007829" key="5">
    <source>
        <dbReference type="PDB" id="1XHH"/>
    </source>
</evidence>
<evidence type="ECO:0007829" key="6">
    <source>
        <dbReference type="PDB" id="2IZ4"/>
    </source>
</evidence>
<accession>O02826</accession>
<gene>
    <name type="primary">MSMB</name>
    <name type="synonym">PSP94</name>
</gene>
<keyword id="KW-0002">3D-structure</keyword>
<keyword id="KW-0903">Direct protein sequencing</keyword>
<keyword id="KW-1015">Disulfide bond</keyword>
<keyword id="KW-0873">Pyrrolidone carboxylic acid</keyword>
<keyword id="KW-1185">Reference proteome</keyword>
<keyword id="KW-0964">Secreted</keyword>
<keyword id="KW-0732">Signal</keyword>
<dbReference type="EMBL" id="S80724">
    <property type="protein sequence ID" value="AAB50711.1"/>
    <property type="molecule type" value="mRNA"/>
</dbReference>
<dbReference type="PIR" id="S41663">
    <property type="entry name" value="S41663"/>
</dbReference>
<dbReference type="RefSeq" id="NP_999017.1">
    <property type="nucleotide sequence ID" value="NM_213852.1"/>
</dbReference>
<dbReference type="PDB" id="1XHH">
    <property type="method" value="NMR"/>
    <property type="chains" value="A=21-111"/>
</dbReference>
<dbReference type="PDB" id="2IZ4">
    <property type="method" value="NMR"/>
    <property type="chains" value="A=21-111"/>
</dbReference>
<dbReference type="PDBsum" id="1XHH"/>
<dbReference type="PDBsum" id="2IZ4"/>
<dbReference type="BMRB" id="O02826"/>
<dbReference type="SMR" id="O02826"/>
<dbReference type="FunCoup" id="O02826">
    <property type="interactions" value="251"/>
</dbReference>
<dbReference type="STRING" id="9823.ENSSSCP00000011089"/>
<dbReference type="PaxDb" id="9823-ENSSSCP00000028823"/>
<dbReference type="Ensembl" id="ENSSSCT00015085900.1">
    <property type="protein sequence ID" value="ENSSSCP00015034931.1"/>
    <property type="gene ID" value="ENSSSCG00015064131.1"/>
</dbReference>
<dbReference type="Ensembl" id="ENSSSCT00030037521.1">
    <property type="protein sequence ID" value="ENSSSCP00030017182.1"/>
    <property type="gene ID" value="ENSSSCG00030026852.1"/>
</dbReference>
<dbReference type="Ensembl" id="ENSSSCT00050024263.1">
    <property type="protein sequence ID" value="ENSSSCP00050010184.1"/>
    <property type="gene ID" value="ENSSSCG00050017855.1"/>
</dbReference>
<dbReference type="Ensembl" id="ENSSSCT00060108450.1">
    <property type="protein sequence ID" value="ENSSSCP00060048325.1"/>
    <property type="gene ID" value="ENSSSCG00060078504.1"/>
</dbReference>
<dbReference type="Ensembl" id="ENSSSCT00060108455.1">
    <property type="protein sequence ID" value="ENSSSCP00060048328.1"/>
    <property type="gene ID" value="ENSSSCG00060078504.1"/>
</dbReference>
<dbReference type="Ensembl" id="ENSSSCT00065032023.1">
    <property type="protein sequence ID" value="ENSSSCP00065013112.1"/>
    <property type="gene ID" value="ENSSSCG00065024053.1"/>
</dbReference>
<dbReference type="GeneID" id="396852"/>
<dbReference type="KEGG" id="ssc:396852"/>
<dbReference type="CTD" id="4477"/>
<dbReference type="eggNOG" id="ENOG502SF48">
    <property type="taxonomic scope" value="Eukaryota"/>
</dbReference>
<dbReference type="HOGENOM" id="CLU_144891_0_0_1"/>
<dbReference type="InParanoid" id="O02826"/>
<dbReference type="OrthoDB" id="6076852at2759"/>
<dbReference type="TreeFam" id="TF338336"/>
<dbReference type="EvolutionaryTrace" id="O02826"/>
<dbReference type="Proteomes" id="UP000008227">
    <property type="component" value="Unplaced"/>
</dbReference>
<dbReference type="Proteomes" id="UP000314985">
    <property type="component" value="Unplaced"/>
</dbReference>
<dbReference type="Proteomes" id="UP000694570">
    <property type="component" value="Unplaced"/>
</dbReference>
<dbReference type="Proteomes" id="UP000694571">
    <property type="component" value="Unplaced"/>
</dbReference>
<dbReference type="Proteomes" id="UP000694720">
    <property type="component" value="Unplaced"/>
</dbReference>
<dbReference type="Proteomes" id="UP000694722">
    <property type="component" value="Unplaced"/>
</dbReference>
<dbReference type="Proteomes" id="UP000694723">
    <property type="component" value="Unplaced"/>
</dbReference>
<dbReference type="Proteomes" id="UP000694724">
    <property type="component" value="Unplaced"/>
</dbReference>
<dbReference type="Proteomes" id="UP000694725">
    <property type="component" value="Unplaced"/>
</dbReference>
<dbReference type="Proteomes" id="UP000694726">
    <property type="component" value="Unplaced"/>
</dbReference>
<dbReference type="Proteomes" id="UP000694727">
    <property type="component" value="Unplaced"/>
</dbReference>
<dbReference type="Proteomes" id="UP000694728">
    <property type="component" value="Unplaced"/>
</dbReference>
<dbReference type="GO" id="GO:0005576">
    <property type="term" value="C:extracellular region"/>
    <property type="evidence" value="ECO:0007669"/>
    <property type="project" value="UniProtKB-SubCell"/>
</dbReference>
<dbReference type="Gene3D" id="2.20.25.590">
    <property type="match status" value="1"/>
</dbReference>
<dbReference type="Gene3D" id="2.10.70.10">
    <property type="entry name" value="Complement Module, domain 1"/>
    <property type="match status" value="1"/>
</dbReference>
<dbReference type="InterPro" id="IPR008735">
    <property type="entry name" value="PSP94"/>
</dbReference>
<dbReference type="PANTHER" id="PTHR10500">
    <property type="entry name" value="BETA-MICROSEMINOPROTEIN"/>
    <property type="match status" value="1"/>
</dbReference>
<dbReference type="PANTHER" id="PTHR10500:SF8">
    <property type="entry name" value="BETA-MICROSEMINOPROTEIN"/>
    <property type="match status" value="1"/>
</dbReference>
<dbReference type="Pfam" id="PF05825">
    <property type="entry name" value="PSP94"/>
    <property type="match status" value="1"/>
</dbReference>
<name>MSMB_PIG</name>